<reference key="1">
    <citation type="journal article" date="2002" name="Proc. Natl. Acad. Sci. U.S.A.">
        <title>Genome sequence of Streptococcus mutans UA159, a cariogenic dental pathogen.</title>
        <authorList>
            <person name="Ajdic D.J."/>
            <person name="McShan W.M."/>
            <person name="McLaughlin R.E."/>
            <person name="Savic G."/>
            <person name="Chang J."/>
            <person name="Carson M.B."/>
            <person name="Primeaux C."/>
            <person name="Tian R."/>
            <person name="Kenton S."/>
            <person name="Jia H.G."/>
            <person name="Lin S.P."/>
            <person name="Qian Y."/>
            <person name="Li S."/>
            <person name="Zhu H."/>
            <person name="Najar F.Z."/>
            <person name="Lai H."/>
            <person name="White J."/>
            <person name="Roe B.A."/>
            <person name="Ferretti J.J."/>
        </authorList>
    </citation>
    <scope>NUCLEOTIDE SEQUENCE [LARGE SCALE GENOMIC DNA]</scope>
    <source>
        <strain>ATCC 700610 / UA159</strain>
    </source>
</reference>
<gene>
    <name evidence="1" type="primary">rpsZ</name>
    <name evidence="1" type="synonym">rpsN</name>
    <name type="ordered locus">SMU_2014</name>
</gene>
<accession>Q8DS26</accession>
<dbReference type="EMBL" id="AE014133">
    <property type="protein sequence ID" value="AAN59617.1"/>
    <property type="molecule type" value="Genomic_DNA"/>
</dbReference>
<dbReference type="RefSeq" id="NP_722311.1">
    <property type="nucleotide sequence ID" value="NC_004350.2"/>
</dbReference>
<dbReference type="RefSeq" id="WP_002262327.1">
    <property type="nucleotide sequence ID" value="NC_004350.2"/>
</dbReference>
<dbReference type="SMR" id="Q8DS26"/>
<dbReference type="STRING" id="210007.SMU_2014"/>
<dbReference type="KEGG" id="smu:SMU_2014"/>
<dbReference type="PATRIC" id="fig|210007.7.peg.1794"/>
<dbReference type="eggNOG" id="COG0199">
    <property type="taxonomic scope" value="Bacteria"/>
</dbReference>
<dbReference type="HOGENOM" id="CLU_139869_3_0_9"/>
<dbReference type="OrthoDB" id="9810484at2"/>
<dbReference type="PhylomeDB" id="Q8DS26"/>
<dbReference type="Proteomes" id="UP000002512">
    <property type="component" value="Chromosome"/>
</dbReference>
<dbReference type="GO" id="GO:0015935">
    <property type="term" value="C:small ribosomal subunit"/>
    <property type="evidence" value="ECO:0007669"/>
    <property type="project" value="TreeGrafter"/>
</dbReference>
<dbReference type="GO" id="GO:0019843">
    <property type="term" value="F:rRNA binding"/>
    <property type="evidence" value="ECO:0007669"/>
    <property type="project" value="UniProtKB-UniRule"/>
</dbReference>
<dbReference type="GO" id="GO:0003735">
    <property type="term" value="F:structural constituent of ribosome"/>
    <property type="evidence" value="ECO:0007669"/>
    <property type="project" value="InterPro"/>
</dbReference>
<dbReference type="GO" id="GO:0008270">
    <property type="term" value="F:zinc ion binding"/>
    <property type="evidence" value="ECO:0007669"/>
    <property type="project" value="UniProtKB-UniRule"/>
</dbReference>
<dbReference type="GO" id="GO:0006412">
    <property type="term" value="P:translation"/>
    <property type="evidence" value="ECO:0007669"/>
    <property type="project" value="UniProtKB-UniRule"/>
</dbReference>
<dbReference type="FunFam" id="4.10.830.10:FF:000001">
    <property type="entry name" value="30S ribosomal protein S14 type Z"/>
    <property type="match status" value="1"/>
</dbReference>
<dbReference type="Gene3D" id="4.10.830.10">
    <property type="entry name" value="30s Ribosomal Protein S14, Chain N"/>
    <property type="match status" value="1"/>
</dbReference>
<dbReference type="HAMAP" id="MF_01364_B">
    <property type="entry name" value="Ribosomal_uS14_2_B"/>
    <property type="match status" value="1"/>
</dbReference>
<dbReference type="InterPro" id="IPR001209">
    <property type="entry name" value="Ribosomal_uS14"/>
</dbReference>
<dbReference type="InterPro" id="IPR023053">
    <property type="entry name" value="Ribosomal_uS14_bact"/>
</dbReference>
<dbReference type="InterPro" id="IPR018271">
    <property type="entry name" value="Ribosomal_uS14_CS"/>
</dbReference>
<dbReference type="InterPro" id="IPR043140">
    <property type="entry name" value="Ribosomal_uS14_sf"/>
</dbReference>
<dbReference type="NCBIfam" id="NF005974">
    <property type="entry name" value="PRK08061.1"/>
    <property type="match status" value="1"/>
</dbReference>
<dbReference type="PANTHER" id="PTHR19836">
    <property type="entry name" value="30S RIBOSOMAL PROTEIN S14"/>
    <property type="match status" value="1"/>
</dbReference>
<dbReference type="PANTHER" id="PTHR19836:SF26">
    <property type="entry name" value="SMALL RIBOSOMAL SUBUNIT PROTEIN US14B"/>
    <property type="match status" value="1"/>
</dbReference>
<dbReference type="Pfam" id="PF00253">
    <property type="entry name" value="Ribosomal_S14"/>
    <property type="match status" value="1"/>
</dbReference>
<dbReference type="SUPFAM" id="SSF57716">
    <property type="entry name" value="Glucocorticoid receptor-like (DNA-binding domain)"/>
    <property type="match status" value="1"/>
</dbReference>
<dbReference type="PROSITE" id="PS00527">
    <property type="entry name" value="RIBOSOMAL_S14"/>
    <property type="match status" value="1"/>
</dbReference>
<sequence>MAKKSMVAKSKRPAKFSTQAYTRCEKCGRPHSVYRKFKLCRVCFRELAYKGQIPGVTKASW</sequence>
<evidence type="ECO:0000255" key="1">
    <source>
        <dbReference type="HAMAP-Rule" id="MF_01364"/>
    </source>
</evidence>
<evidence type="ECO:0000305" key="2"/>
<comment type="function">
    <text evidence="1">Binds 16S rRNA, required for the assembly of 30S particles and may also be responsible for determining the conformation of the 16S rRNA at the A site.</text>
</comment>
<comment type="cofactor">
    <cofactor evidence="1">
        <name>Zn(2+)</name>
        <dbReference type="ChEBI" id="CHEBI:29105"/>
    </cofactor>
    <text evidence="1">Binds 1 zinc ion per subunit.</text>
</comment>
<comment type="subunit">
    <text evidence="1">Part of the 30S ribosomal subunit. Contacts proteins S3 and S10.</text>
</comment>
<comment type="similarity">
    <text evidence="1">Belongs to the universal ribosomal protein uS14 family. Zinc-binding uS14 subfamily.</text>
</comment>
<name>RS14Z_STRMU</name>
<organism>
    <name type="scientific">Streptococcus mutans serotype c (strain ATCC 700610 / UA159)</name>
    <dbReference type="NCBI Taxonomy" id="210007"/>
    <lineage>
        <taxon>Bacteria</taxon>
        <taxon>Bacillati</taxon>
        <taxon>Bacillota</taxon>
        <taxon>Bacilli</taxon>
        <taxon>Lactobacillales</taxon>
        <taxon>Streptococcaceae</taxon>
        <taxon>Streptococcus</taxon>
    </lineage>
</organism>
<protein>
    <recommendedName>
        <fullName evidence="1">Small ribosomal subunit protein uS14</fullName>
    </recommendedName>
    <alternativeName>
        <fullName evidence="2">30S ribosomal protein S14 type Z</fullName>
    </alternativeName>
</protein>
<proteinExistence type="inferred from homology"/>
<keyword id="KW-0479">Metal-binding</keyword>
<keyword id="KW-1185">Reference proteome</keyword>
<keyword id="KW-0687">Ribonucleoprotein</keyword>
<keyword id="KW-0689">Ribosomal protein</keyword>
<keyword id="KW-0694">RNA-binding</keyword>
<keyword id="KW-0699">rRNA-binding</keyword>
<keyword id="KW-0862">Zinc</keyword>
<feature type="chain" id="PRO_0000269144" description="Small ribosomal subunit protein uS14">
    <location>
        <begin position="1"/>
        <end position="61"/>
    </location>
</feature>
<feature type="binding site" evidence="1">
    <location>
        <position position="24"/>
    </location>
    <ligand>
        <name>Zn(2+)</name>
        <dbReference type="ChEBI" id="CHEBI:29105"/>
    </ligand>
</feature>
<feature type="binding site" evidence="1">
    <location>
        <position position="27"/>
    </location>
    <ligand>
        <name>Zn(2+)</name>
        <dbReference type="ChEBI" id="CHEBI:29105"/>
    </ligand>
</feature>
<feature type="binding site" evidence="1">
    <location>
        <position position="40"/>
    </location>
    <ligand>
        <name>Zn(2+)</name>
        <dbReference type="ChEBI" id="CHEBI:29105"/>
    </ligand>
</feature>
<feature type="binding site" evidence="1">
    <location>
        <position position="43"/>
    </location>
    <ligand>
        <name>Zn(2+)</name>
        <dbReference type="ChEBI" id="CHEBI:29105"/>
    </ligand>
</feature>